<organism>
    <name type="scientific">Escherichia coli O139:H28 (strain E24377A / ETEC)</name>
    <dbReference type="NCBI Taxonomy" id="331111"/>
    <lineage>
        <taxon>Bacteria</taxon>
        <taxon>Pseudomonadati</taxon>
        <taxon>Pseudomonadota</taxon>
        <taxon>Gammaproteobacteria</taxon>
        <taxon>Enterobacterales</taxon>
        <taxon>Enterobacteriaceae</taxon>
        <taxon>Escherichia</taxon>
    </lineage>
</organism>
<protein>
    <recommendedName>
        <fullName evidence="1">HTH-type transcriptional regulator MalT</fullName>
    </recommendedName>
    <alternativeName>
        <fullName evidence="1">ATP-dependent transcriptional activator MalT</fullName>
    </alternativeName>
</protein>
<feature type="chain" id="PRO_1000085765" description="HTH-type transcriptional regulator MalT">
    <location>
        <begin position="1"/>
        <end position="901"/>
    </location>
</feature>
<feature type="domain" description="HTH luxR-type" evidence="1">
    <location>
        <begin position="829"/>
        <end position="894"/>
    </location>
</feature>
<feature type="DNA-binding region" description="H-T-H motif" evidence="1">
    <location>
        <begin position="853"/>
        <end position="872"/>
    </location>
</feature>
<feature type="binding site" evidence="1">
    <location>
        <begin position="39"/>
        <end position="46"/>
    </location>
    <ligand>
        <name>ATP</name>
        <dbReference type="ChEBI" id="CHEBI:30616"/>
    </ligand>
</feature>
<gene>
    <name evidence="1" type="primary">malT</name>
    <name type="ordered locus">EcE24377A_3894</name>
</gene>
<proteinExistence type="inferred from homology"/>
<evidence type="ECO:0000255" key="1">
    <source>
        <dbReference type="HAMAP-Rule" id="MF_01247"/>
    </source>
</evidence>
<comment type="function">
    <text evidence="1">Positively regulates the transcription of the maltose regulon whose gene products are responsible for uptake and catabolism of malto-oligosaccharides. Specifically binds to the promoter region of its target genes, recognizing a short DNA motif called the MalT box.</text>
</comment>
<comment type="activity regulation">
    <text evidence="1">Activated by ATP and maltotriose, which are both required for DNA binding.</text>
</comment>
<comment type="subunit">
    <text evidence="1">Monomer in solution. Oligomerizes to an active state in the presence of the positive effectors ATP and maltotriose.</text>
</comment>
<comment type="similarity">
    <text evidence="1">Belongs to the MalT family.</text>
</comment>
<keyword id="KW-0010">Activator</keyword>
<keyword id="KW-0067">ATP-binding</keyword>
<keyword id="KW-0119">Carbohydrate metabolism</keyword>
<keyword id="KW-0238">DNA-binding</keyword>
<keyword id="KW-0547">Nucleotide-binding</keyword>
<keyword id="KW-1185">Reference proteome</keyword>
<keyword id="KW-0804">Transcription</keyword>
<keyword id="KW-0805">Transcription regulation</keyword>
<name>MALT_ECO24</name>
<dbReference type="EMBL" id="CP000800">
    <property type="protein sequence ID" value="ABV21167.1"/>
    <property type="molecule type" value="Genomic_DNA"/>
</dbReference>
<dbReference type="RefSeq" id="WP_000906960.1">
    <property type="nucleotide sequence ID" value="NC_009801.1"/>
</dbReference>
<dbReference type="SMR" id="A7ZSU8"/>
<dbReference type="KEGG" id="ecw:EcE24377A_3894"/>
<dbReference type="HOGENOM" id="CLU_006325_3_0_6"/>
<dbReference type="Proteomes" id="UP000001122">
    <property type="component" value="Chromosome"/>
</dbReference>
<dbReference type="GO" id="GO:0005524">
    <property type="term" value="F:ATP binding"/>
    <property type="evidence" value="ECO:0007669"/>
    <property type="project" value="UniProtKB-UniRule"/>
</dbReference>
<dbReference type="GO" id="GO:0003677">
    <property type="term" value="F:DNA binding"/>
    <property type="evidence" value="ECO:0007669"/>
    <property type="project" value="UniProtKB-KW"/>
</dbReference>
<dbReference type="GO" id="GO:0003700">
    <property type="term" value="F:DNA-binding transcription factor activity"/>
    <property type="evidence" value="ECO:0007669"/>
    <property type="project" value="UniProtKB-UniRule"/>
</dbReference>
<dbReference type="GO" id="GO:0045913">
    <property type="term" value="P:positive regulation of carbohydrate metabolic process"/>
    <property type="evidence" value="ECO:0007669"/>
    <property type="project" value="UniProtKB-UniRule"/>
</dbReference>
<dbReference type="GO" id="GO:0045893">
    <property type="term" value="P:positive regulation of DNA-templated transcription"/>
    <property type="evidence" value="ECO:0007669"/>
    <property type="project" value="UniProtKB-UniRule"/>
</dbReference>
<dbReference type="CDD" id="cd06170">
    <property type="entry name" value="LuxR_C_like"/>
    <property type="match status" value="1"/>
</dbReference>
<dbReference type="FunFam" id="1.10.10.10:FF:000115">
    <property type="entry name" value="HTH-type transcriptional regulator MalT"/>
    <property type="match status" value="1"/>
</dbReference>
<dbReference type="FunFam" id="1.25.40.10:FF:000086">
    <property type="entry name" value="HTH-type transcriptional regulator MalT"/>
    <property type="match status" value="1"/>
</dbReference>
<dbReference type="Gene3D" id="3.40.50.300">
    <property type="entry name" value="P-loop containing nucleotide triphosphate hydrolases"/>
    <property type="match status" value="1"/>
</dbReference>
<dbReference type="Gene3D" id="1.25.40.10">
    <property type="entry name" value="Tetratricopeptide repeat domain"/>
    <property type="match status" value="1"/>
</dbReference>
<dbReference type="Gene3D" id="1.10.10.10">
    <property type="entry name" value="Winged helix-like DNA-binding domain superfamily/Winged helix DNA-binding domain"/>
    <property type="match status" value="1"/>
</dbReference>
<dbReference type="HAMAP" id="MF_01247">
    <property type="entry name" value="HTH_type_MalT"/>
    <property type="match status" value="1"/>
</dbReference>
<dbReference type="InterPro" id="IPR027417">
    <property type="entry name" value="P-loop_NTPase"/>
</dbReference>
<dbReference type="InterPro" id="IPR016032">
    <property type="entry name" value="Sig_transdc_resp-reg_C-effctor"/>
</dbReference>
<dbReference type="InterPro" id="IPR011990">
    <property type="entry name" value="TPR-like_helical_dom_sf"/>
</dbReference>
<dbReference type="InterPro" id="IPR041617">
    <property type="entry name" value="TPR_MalT"/>
</dbReference>
<dbReference type="InterPro" id="IPR023768">
    <property type="entry name" value="Tscrpt_reg_HTH_MalT"/>
</dbReference>
<dbReference type="InterPro" id="IPR000792">
    <property type="entry name" value="Tscrpt_reg_LuxR_C"/>
</dbReference>
<dbReference type="InterPro" id="IPR036388">
    <property type="entry name" value="WH-like_DNA-bd_sf"/>
</dbReference>
<dbReference type="NCBIfam" id="NF003420">
    <property type="entry name" value="PRK04841.1"/>
    <property type="match status" value="1"/>
</dbReference>
<dbReference type="PANTHER" id="PTHR44688">
    <property type="entry name" value="DNA-BINDING TRANSCRIPTIONAL ACTIVATOR DEVR_DOSR"/>
    <property type="match status" value="1"/>
</dbReference>
<dbReference type="PANTHER" id="PTHR44688:SF16">
    <property type="entry name" value="DNA-BINDING TRANSCRIPTIONAL ACTIVATOR DEVR_DOSR"/>
    <property type="match status" value="1"/>
</dbReference>
<dbReference type="Pfam" id="PF00196">
    <property type="entry name" value="GerE"/>
    <property type="match status" value="1"/>
</dbReference>
<dbReference type="Pfam" id="PF17874">
    <property type="entry name" value="TPR_MalT"/>
    <property type="match status" value="1"/>
</dbReference>
<dbReference type="PRINTS" id="PR00038">
    <property type="entry name" value="HTHLUXR"/>
</dbReference>
<dbReference type="SMART" id="SM00421">
    <property type="entry name" value="HTH_LUXR"/>
    <property type="match status" value="1"/>
</dbReference>
<dbReference type="SUPFAM" id="SSF46894">
    <property type="entry name" value="C-terminal effector domain of the bipartite response regulators"/>
    <property type="match status" value="1"/>
</dbReference>
<dbReference type="SUPFAM" id="SSF52540">
    <property type="entry name" value="P-loop containing nucleoside triphosphate hydrolases"/>
    <property type="match status" value="1"/>
</dbReference>
<dbReference type="SUPFAM" id="SSF48452">
    <property type="entry name" value="TPR-like"/>
    <property type="match status" value="1"/>
</dbReference>
<dbReference type="PROSITE" id="PS00622">
    <property type="entry name" value="HTH_LUXR_1"/>
    <property type="match status" value="1"/>
</dbReference>
<dbReference type="PROSITE" id="PS50043">
    <property type="entry name" value="HTH_LUXR_2"/>
    <property type="match status" value="1"/>
</dbReference>
<sequence>MLIPSKLSRPVRLDHTVVRERLLAKLSGANNFRLALITSPAGYGKTTLISQWAAGKNDIGWYSLDEGDNQQERFASYLIAAVQQATNGHCAICETMAQKRQYASLTSLFAQLFIELAEWHSPLYLVIDDYHLITNPVIHESMRFFIRHQPENLTLVVLSRNLPQLGIANLRVRDQLLEIGSQQLAFTHQEAKQFFDCRLSSPIEAAESSRICDDVSGWATALQLIALSARQNTHSAHKSARRLAGINASHLSDYLVDEVLDNVDLATRHFLLKSAILRSMNDALITRVTGEENGQMRLEEIERQGLFLQRMDDTGEWFCYHPLFGNFLRQRCQWELAAELPEIHRAAAESWMAQGFPSEAIHHALAAGDALMLRDILLNHAWSLFNHSELSLLEESLKALPWDSLLENPQLVLLQAWLMQSQHRYGEVNTLLARAEHEIKDIREDTMHAEFNALRAQVAINDGNPDEAERLAKLALEELPPGWFYSRIVATSVLGEVLHCKGELTRSLALMQQTEQMARQHDVWHYALWSLIQQSEILFAQGFLQTAWETQEKAFQLINEQHLEQLPMHEFLVRIRAQLLWAWARLDEAEASARSGIEVLSSYQPQQQLQCLAMLIQCSLARGDLDNARSQLNRLENLLGNGKYHSDWISNANKVRVIYWQMTGDKAAAANWLRHTAKPEFANNHFLQGQWRNIARAQILLGEFEPAEIVLEELNENARSLRLMSDLNRNLLLLNQLYWQAGRKSDAQRVLLDALKLANRTGFISHFVIEGEAMAQQLRQLIQLNTLPELEQHRAQRILREINQHHRHKFAHFDENFVERLLNHPEVPELIRTSPLTQREWQVLGLIYSGYSNEQIAGELEVAATTIKTHIRNLYQKLGVAHRQAAVQHAQKLLKMMGYGV</sequence>
<accession>A7ZSU8</accession>
<reference key="1">
    <citation type="journal article" date="2008" name="J. Bacteriol.">
        <title>The pangenome structure of Escherichia coli: comparative genomic analysis of E. coli commensal and pathogenic isolates.</title>
        <authorList>
            <person name="Rasko D.A."/>
            <person name="Rosovitz M.J."/>
            <person name="Myers G.S.A."/>
            <person name="Mongodin E.F."/>
            <person name="Fricke W.F."/>
            <person name="Gajer P."/>
            <person name="Crabtree J."/>
            <person name="Sebaihia M."/>
            <person name="Thomson N.R."/>
            <person name="Chaudhuri R."/>
            <person name="Henderson I.R."/>
            <person name="Sperandio V."/>
            <person name="Ravel J."/>
        </authorList>
    </citation>
    <scope>NUCLEOTIDE SEQUENCE [LARGE SCALE GENOMIC DNA]</scope>
    <source>
        <strain>E24377A / ETEC</strain>
    </source>
</reference>